<protein>
    <recommendedName>
        <fullName evidence="1">Nucleoside diphosphate kinase</fullName>
        <shortName evidence="1">NDK</shortName>
        <shortName evidence="1">NDP kinase</shortName>
        <ecNumber evidence="1">2.7.4.6</ecNumber>
    </recommendedName>
    <alternativeName>
        <fullName evidence="1">Nucleoside-2-P kinase</fullName>
    </alternativeName>
</protein>
<organism>
    <name type="scientific">Campylobacter jejuni subsp. jejuni serotype O:23/36 (strain 81-176)</name>
    <dbReference type="NCBI Taxonomy" id="354242"/>
    <lineage>
        <taxon>Bacteria</taxon>
        <taxon>Pseudomonadati</taxon>
        <taxon>Campylobacterota</taxon>
        <taxon>Epsilonproteobacteria</taxon>
        <taxon>Campylobacterales</taxon>
        <taxon>Campylobacteraceae</taxon>
        <taxon>Campylobacter</taxon>
    </lineage>
</organism>
<reference key="1">
    <citation type="submission" date="2006-12" db="EMBL/GenBank/DDBJ databases">
        <authorList>
            <person name="Fouts D.E."/>
            <person name="Nelson K.E."/>
            <person name="Sebastian Y."/>
        </authorList>
    </citation>
    <scope>NUCLEOTIDE SEQUENCE [LARGE SCALE GENOMIC DNA]</scope>
    <source>
        <strain>81-176</strain>
    </source>
</reference>
<sequence>MEKTLSIIKPDAVKKGVIGKILDRFESNGLRIAAMKKVQLSKEQAENFYAVHKERPFFKDLVEFMISGPVVVSVLEGEGAVLKNRDLMGATNPKEAKAGTIRADFAESIDANAVHGSDSLENAKIEIEFFFKPNEIC</sequence>
<proteinExistence type="inferred from homology"/>
<gene>
    <name evidence="1" type="primary">ndk</name>
    <name type="ordered locus">CJJ81176_0354</name>
</gene>
<feature type="chain" id="PRO_1000026225" description="Nucleoside diphosphate kinase">
    <location>
        <begin position="1"/>
        <end position="137"/>
    </location>
</feature>
<feature type="active site" description="Pros-phosphohistidine intermediate" evidence="1">
    <location>
        <position position="115"/>
    </location>
</feature>
<feature type="binding site" evidence="1">
    <location>
        <position position="9"/>
    </location>
    <ligand>
        <name>ATP</name>
        <dbReference type="ChEBI" id="CHEBI:30616"/>
    </ligand>
</feature>
<feature type="binding site" evidence="1">
    <location>
        <position position="57"/>
    </location>
    <ligand>
        <name>ATP</name>
        <dbReference type="ChEBI" id="CHEBI:30616"/>
    </ligand>
</feature>
<feature type="binding site" evidence="1">
    <location>
        <position position="85"/>
    </location>
    <ligand>
        <name>ATP</name>
        <dbReference type="ChEBI" id="CHEBI:30616"/>
    </ligand>
</feature>
<feature type="binding site" evidence="1">
    <location>
        <position position="91"/>
    </location>
    <ligand>
        <name>ATP</name>
        <dbReference type="ChEBI" id="CHEBI:30616"/>
    </ligand>
</feature>
<feature type="binding site" evidence="1">
    <location>
        <position position="102"/>
    </location>
    <ligand>
        <name>ATP</name>
        <dbReference type="ChEBI" id="CHEBI:30616"/>
    </ligand>
</feature>
<feature type="binding site" evidence="1">
    <location>
        <position position="112"/>
    </location>
    <ligand>
        <name>ATP</name>
        <dbReference type="ChEBI" id="CHEBI:30616"/>
    </ligand>
</feature>
<keyword id="KW-0067">ATP-binding</keyword>
<keyword id="KW-0963">Cytoplasm</keyword>
<keyword id="KW-0418">Kinase</keyword>
<keyword id="KW-0460">Magnesium</keyword>
<keyword id="KW-0479">Metal-binding</keyword>
<keyword id="KW-0546">Nucleotide metabolism</keyword>
<keyword id="KW-0547">Nucleotide-binding</keyword>
<keyword id="KW-0597">Phosphoprotein</keyword>
<keyword id="KW-0808">Transferase</keyword>
<comment type="function">
    <text evidence="1">Major role in the synthesis of nucleoside triphosphates other than ATP. The ATP gamma phosphate is transferred to the NDP beta phosphate via a ping-pong mechanism, using a phosphorylated active-site intermediate.</text>
</comment>
<comment type="catalytic activity">
    <reaction evidence="1">
        <text>a 2'-deoxyribonucleoside 5'-diphosphate + ATP = a 2'-deoxyribonucleoside 5'-triphosphate + ADP</text>
        <dbReference type="Rhea" id="RHEA:44640"/>
        <dbReference type="ChEBI" id="CHEBI:30616"/>
        <dbReference type="ChEBI" id="CHEBI:61560"/>
        <dbReference type="ChEBI" id="CHEBI:73316"/>
        <dbReference type="ChEBI" id="CHEBI:456216"/>
        <dbReference type="EC" id="2.7.4.6"/>
    </reaction>
</comment>
<comment type="catalytic activity">
    <reaction evidence="1">
        <text>a ribonucleoside 5'-diphosphate + ATP = a ribonucleoside 5'-triphosphate + ADP</text>
        <dbReference type="Rhea" id="RHEA:18113"/>
        <dbReference type="ChEBI" id="CHEBI:30616"/>
        <dbReference type="ChEBI" id="CHEBI:57930"/>
        <dbReference type="ChEBI" id="CHEBI:61557"/>
        <dbReference type="ChEBI" id="CHEBI:456216"/>
        <dbReference type="EC" id="2.7.4.6"/>
    </reaction>
</comment>
<comment type="cofactor">
    <cofactor evidence="1">
        <name>Mg(2+)</name>
        <dbReference type="ChEBI" id="CHEBI:18420"/>
    </cofactor>
</comment>
<comment type="subunit">
    <text evidence="1">Homotetramer.</text>
</comment>
<comment type="subcellular location">
    <subcellularLocation>
        <location evidence="1">Cytoplasm</location>
    </subcellularLocation>
</comment>
<comment type="similarity">
    <text evidence="1">Belongs to the NDK family.</text>
</comment>
<dbReference type="EC" id="2.7.4.6" evidence="1"/>
<dbReference type="EMBL" id="CP000538">
    <property type="protein sequence ID" value="EAQ73035.1"/>
    <property type="molecule type" value="Genomic_DNA"/>
</dbReference>
<dbReference type="RefSeq" id="WP_002859435.1">
    <property type="nucleotide sequence ID" value="NC_008787.1"/>
</dbReference>
<dbReference type="SMR" id="A1VY51"/>
<dbReference type="KEGG" id="cjj:CJJ81176_0354"/>
<dbReference type="eggNOG" id="COG0105">
    <property type="taxonomic scope" value="Bacteria"/>
</dbReference>
<dbReference type="HOGENOM" id="CLU_060216_8_1_7"/>
<dbReference type="Proteomes" id="UP000000646">
    <property type="component" value="Chromosome"/>
</dbReference>
<dbReference type="GO" id="GO:0005737">
    <property type="term" value="C:cytoplasm"/>
    <property type="evidence" value="ECO:0007669"/>
    <property type="project" value="UniProtKB-SubCell"/>
</dbReference>
<dbReference type="GO" id="GO:0005524">
    <property type="term" value="F:ATP binding"/>
    <property type="evidence" value="ECO:0007669"/>
    <property type="project" value="UniProtKB-UniRule"/>
</dbReference>
<dbReference type="GO" id="GO:0046872">
    <property type="term" value="F:metal ion binding"/>
    <property type="evidence" value="ECO:0007669"/>
    <property type="project" value="UniProtKB-KW"/>
</dbReference>
<dbReference type="GO" id="GO:0004550">
    <property type="term" value="F:nucleoside diphosphate kinase activity"/>
    <property type="evidence" value="ECO:0007669"/>
    <property type="project" value="UniProtKB-UniRule"/>
</dbReference>
<dbReference type="GO" id="GO:0006241">
    <property type="term" value="P:CTP biosynthetic process"/>
    <property type="evidence" value="ECO:0007669"/>
    <property type="project" value="UniProtKB-UniRule"/>
</dbReference>
<dbReference type="GO" id="GO:0006183">
    <property type="term" value="P:GTP biosynthetic process"/>
    <property type="evidence" value="ECO:0007669"/>
    <property type="project" value="UniProtKB-UniRule"/>
</dbReference>
<dbReference type="GO" id="GO:0006228">
    <property type="term" value="P:UTP biosynthetic process"/>
    <property type="evidence" value="ECO:0007669"/>
    <property type="project" value="UniProtKB-UniRule"/>
</dbReference>
<dbReference type="CDD" id="cd04413">
    <property type="entry name" value="NDPk_I"/>
    <property type="match status" value="1"/>
</dbReference>
<dbReference type="FunFam" id="3.30.70.141:FF:000001">
    <property type="entry name" value="Nucleoside diphosphate kinase"/>
    <property type="match status" value="1"/>
</dbReference>
<dbReference type="Gene3D" id="3.30.70.141">
    <property type="entry name" value="Nucleoside diphosphate kinase-like domain"/>
    <property type="match status" value="1"/>
</dbReference>
<dbReference type="HAMAP" id="MF_00451">
    <property type="entry name" value="NDP_kinase"/>
    <property type="match status" value="1"/>
</dbReference>
<dbReference type="InterPro" id="IPR034907">
    <property type="entry name" value="NDK-like_dom"/>
</dbReference>
<dbReference type="InterPro" id="IPR036850">
    <property type="entry name" value="NDK-like_dom_sf"/>
</dbReference>
<dbReference type="InterPro" id="IPR001564">
    <property type="entry name" value="Nucleoside_diP_kinase"/>
</dbReference>
<dbReference type="InterPro" id="IPR023005">
    <property type="entry name" value="Nucleoside_diP_kinase_AS"/>
</dbReference>
<dbReference type="NCBIfam" id="NF001908">
    <property type="entry name" value="PRK00668.1"/>
    <property type="match status" value="1"/>
</dbReference>
<dbReference type="PANTHER" id="PTHR46161">
    <property type="entry name" value="NUCLEOSIDE DIPHOSPHATE KINASE"/>
    <property type="match status" value="1"/>
</dbReference>
<dbReference type="PANTHER" id="PTHR46161:SF3">
    <property type="entry name" value="NUCLEOSIDE DIPHOSPHATE KINASE DDB_G0292928-RELATED"/>
    <property type="match status" value="1"/>
</dbReference>
<dbReference type="Pfam" id="PF00334">
    <property type="entry name" value="NDK"/>
    <property type="match status" value="1"/>
</dbReference>
<dbReference type="PRINTS" id="PR01243">
    <property type="entry name" value="NUCDPKINASE"/>
</dbReference>
<dbReference type="SMART" id="SM00562">
    <property type="entry name" value="NDK"/>
    <property type="match status" value="1"/>
</dbReference>
<dbReference type="SUPFAM" id="SSF54919">
    <property type="entry name" value="Nucleoside diphosphate kinase, NDK"/>
    <property type="match status" value="1"/>
</dbReference>
<dbReference type="PROSITE" id="PS00469">
    <property type="entry name" value="NDPK"/>
    <property type="match status" value="1"/>
</dbReference>
<dbReference type="PROSITE" id="PS51374">
    <property type="entry name" value="NDPK_LIKE"/>
    <property type="match status" value="1"/>
</dbReference>
<evidence type="ECO:0000255" key="1">
    <source>
        <dbReference type="HAMAP-Rule" id="MF_00451"/>
    </source>
</evidence>
<name>NDK_CAMJJ</name>
<accession>A1VY51</accession>